<feature type="chain" id="PRO_1000061396" description="L-threonine 3-dehydrogenase">
    <location>
        <begin position="1"/>
        <end position="341"/>
    </location>
</feature>
<feature type="active site" description="Charge relay system" evidence="1">
    <location>
        <position position="40"/>
    </location>
</feature>
<feature type="active site" description="Charge relay system" evidence="1">
    <location>
        <position position="43"/>
    </location>
</feature>
<feature type="binding site" evidence="1">
    <location>
        <position position="38"/>
    </location>
    <ligand>
        <name>Zn(2+)</name>
        <dbReference type="ChEBI" id="CHEBI:29105"/>
        <label>1</label>
        <note>catalytic</note>
    </ligand>
</feature>
<feature type="binding site" evidence="1">
    <location>
        <position position="63"/>
    </location>
    <ligand>
        <name>Zn(2+)</name>
        <dbReference type="ChEBI" id="CHEBI:29105"/>
        <label>1</label>
        <note>catalytic</note>
    </ligand>
</feature>
<feature type="binding site" evidence="1">
    <location>
        <position position="64"/>
    </location>
    <ligand>
        <name>Zn(2+)</name>
        <dbReference type="ChEBI" id="CHEBI:29105"/>
        <label>1</label>
        <note>catalytic</note>
    </ligand>
</feature>
<feature type="binding site" evidence="1">
    <location>
        <position position="93"/>
    </location>
    <ligand>
        <name>Zn(2+)</name>
        <dbReference type="ChEBI" id="CHEBI:29105"/>
        <label>2</label>
    </ligand>
</feature>
<feature type="binding site" evidence="1">
    <location>
        <position position="96"/>
    </location>
    <ligand>
        <name>Zn(2+)</name>
        <dbReference type="ChEBI" id="CHEBI:29105"/>
        <label>2</label>
    </ligand>
</feature>
<feature type="binding site" evidence="1">
    <location>
        <position position="99"/>
    </location>
    <ligand>
        <name>Zn(2+)</name>
        <dbReference type="ChEBI" id="CHEBI:29105"/>
        <label>2</label>
    </ligand>
</feature>
<feature type="binding site" evidence="1">
    <location>
        <position position="107"/>
    </location>
    <ligand>
        <name>Zn(2+)</name>
        <dbReference type="ChEBI" id="CHEBI:29105"/>
        <label>2</label>
    </ligand>
</feature>
<feature type="binding site" evidence="1">
    <location>
        <position position="175"/>
    </location>
    <ligand>
        <name>NAD(+)</name>
        <dbReference type="ChEBI" id="CHEBI:57540"/>
    </ligand>
</feature>
<feature type="binding site" evidence="1">
    <location>
        <position position="195"/>
    </location>
    <ligand>
        <name>NAD(+)</name>
        <dbReference type="ChEBI" id="CHEBI:57540"/>
    </ligand>
</feature>
<feature type="binding site" evidence="1">
    <location>
        <position position="200"/>
    </location>
    <ligand>
        <name>NAD(+)</name>
        <dbReference type="ChEBI" id="CHEBI:57540"/>
    </ligand>
</feature>
<feature type="binding site" evidence="1">
    <location>
        <begin position="262"/>
        <end position="264"/>
    </location>
    <ligand>
        <name>NAD(+)</name>
        <dbReference type="ChEBI" id="CHEBI:57540"/>
    </ligand>
</feature>
<feature type="binding site" evidence="1">
    <location>
        <begin position="286"/>
        <end position="287"/>
    </location>
    <ligand>
        <name>NAD(+)</name>
        <dbReference type="ChEBI" id="CHEBI:57540"/>
    </ligand>
</feature>
<feature type="site" description="Important for catalytic activity for the proton relay mechanism but does not participate directly in the coordination of zinc atom" evidence="1">
    <location>
        <position position="148"/>
    </location>
</feature>
<reference key="1">
    <citation type="journal article" date="2007" name="PLoS Genet.">
        <title>The complete genome sequence of Yersinia pseudotuberculosis IP31758, the causative agent of Far East scarlet-like fever.</title>
        <authorList>
            <person name="Eppinger M."/>
            <person name="Rosovitz M.J."/>
            <person name="Fricke W.F."/>
            <person name="Rasko D.A."/>
            <person name="Kokorina G."/>
            <person name="Fayolle C."/>
            <person name="Lindler L.E."/>
            <person name="Carniel E."/>
            <person name="Ravel J."/>
        </authorList>
    </citation>
    <scope>NUCLEOTIDE SEQUENCE [LARGE SCALE GENOMIC DNA]</scope>
    <source>
        <strain>IP 31758</strain>
    </source>
</reference>
<evidence type="ECO:0000255" key="1">
    <source>
        <dbReference type="HAMAP-Rule" id="MF_00627"/>
    </source>
</evidence>
<protein>
    <recommendedName>
        <fullName evidence="1">L-threonine 3-dehydrogenase</fullName>
        <shortName evidence="1">TDH</shortName>
        <ecNumber evidence="1">1.1.1.103</ecNumber>
    </recommendedName>
</protein>
<keyword id="KW-0963">Cytoplasm</keyword>
<keyword id="KW-0479">Metal-binding</keyword>
<keyword id="KW-0520">NAD</keyword>
<keyword id="KW-0560">Oxidoreductase</keyword>
<keyword id="KW-0862">Zinc</keyword>
<accession>A7FCU5</accession>
<organism>
    <name type="scientific">Yersinia pseudotuberculosis serotype O:1b (strain IP 31758)</name>
    <dbReference type="NCBI Taxonomy" id="349747"/>
    <lineage>
        <taxon>Bacteria</taxon>
        <taxon>Pseudomonadati</taxon>
        <taxon>Pseudomonadota</taxon>
        <taxon>Gammaproteobacteria</taxon>
        <taxon>Enterobacterales</taxon>
        <taxon>Yersiniaceae</taxon>
        <taxon>Yersinia</taxon>
    </lineage>
</organism>
<proteinExistence type="inferred from homology"/>
<sequence>MKALSKLKAEEGIWMTDVPQPELGHNDIMIKIRKTAICGTDVHIYNWDEWSQKTIPVPMVVGHEYVGEVVAIGQEVKGFNIGDRVSGEGHITCGHCRNCRGGRTHLCRNTVGVGVNRPGSFAEYLVIPAFNAFKIPDNISDELAAIFDPFGNAVHTALSFDLVGEDVLVSGAGPIGIMAAAVCKHVGARHVVITDVNEYRLDLARKMGVTRAVNVSKENLNDVMTELGMTEGFDVGLEMSGAPPAFRSLLNSMNHGGRIAMLGIPPSDMSIDWNQVIFKGLFIKGIYGREMFETWYKMAALIQSGLDLTPIITHRFPIDEFQQGFDAMRSGKSGKVVLSWD</sequence>
<gene>
    <name evidence="1" type="primary">tdh</name>
    <name type="ordered locus">YpsIP31758_0072</name>
</gene>
<comment type="function">
    <text evidence="1">Catalyzes the NAD(+)-dependent oxidation of L-threonine to 2-amino-3-ketobutyrate.</text>
</comment>
<comment type="catalytic activity">
    <reaction evidence="1">
        <text>L-threonine + NAD(+) = (2S)-2-amino-3-oxobutanoate + NADH + H(+)</text>
        <dbReference type="Rhea" id="RHEA:13161"/>
        <dbReference type="ChEBI" id="CHEBI:15378"/>
        <dbReference type="ChEBI" id="CHEBI:57540"/>
        <dbReference type="ChEBI" id="CHEBI:57926"/>
        <dbReference type="ChEBI" id="CHEBI:57945"/>
        <dbReference type="ChEBI" id="CHEBI:78948"/>
        <dbReference type="EC" id="1.1.1.103"/>
    </reaction>
</comment>
<comment type="cofactor">
    <cofactor evidence="1">
        <name>Zn(2+)</name>
        <dbReference type="ChEBI" id="CHEBI:29105"/>
    </cofactor>
    <text evidence="1">Binds 2 Zn(2+) ions per subunit.</text>
</comment>
<comment type="pathway">
    <text evidence="1">Amino-acid degradation; L-threonine degradation via oxydo-reductase pathway; glycine from L-threonine: step 1/2.</text>
</comment>
<comment type="subunit">
    <text evidence="1">Homotetramer.</text>
</comment>
<comment type="subcellular location">
    <subcellularLocation>
        <location evidence="1">Cytoplasm</location>
    </subcellularLocation>
</comment>
<comment type="similarity">
    <text evidence="1">Belongs to the zinc-containing alcohol dehydrogenase family.</text>
</comment>
<name>TDH_YERP3</name>
<dbReference type="EC" id="1.1.1.103" evidence="1"/>
<dbReference type="EMBL" id="CP000720">
    <property type="protein sequence ID" value="ABS45946.1"/>
    <property type="molecule type" value="Genomic_DNA"/>
</dbReference>
<dbReference type="RefSeq" id="WP_011191451.1">
    <property type="nucleotide sequence ID" value="NC_009708.1"/>
</dbReference>
<dbReference type="SMR" id="A7FCU5"/>
<dbReference type="GeneID" id="96663541"/>
<dbReference type="KEGG" id="ypi:YpsIP31758_0072"/>
<dbReference type="HOGENOM" id="CLU_026673_11_0_6"/>
<dbReference type="UniPathway" id="UPA00046">
    <property type="reaction ID" value="UER00505"/>
</dbReference>
<dbReference type="Proteomes" id="UP000002412">
    <property type="component" value="Chromosome"/>
</dbReference>
<dbReference type="GO" id="GO:0005737">
    <property type="term" value="C:cytoplasm"/>
    <property type="evidence" value="ECO:0007669"/>
    <property type="project" value="UniProtKB-SubCell"/>
</dbReference>
<dbReference type="GO" id="GO:0008743">
    <property type="term" value="F:L-threonine 3-dehydrogenase activity"/>
    <property type="evidence" value="ECO:0007669"/>
    <property type="project" value="UniProtKB-UniRule"/>
</dbReference>
<dbReference type="GO" id="GO:0008270">
    <property type="term" value="F:zinc ion binding"/>
    <property type="evidence" value="ECO:0007669"/>
    <property type="project" value="UniProtKB-UniRule"/>
</dbReference>
<dbReference type="GO" id="GO:0019518">
    <property type="term" value="P:L-threonine catabolic process to glycine"/>
    <property type="evidence" value="ECO:0007669"/>
    <property type="project" value="UniProtKB-UniPathway"/>
</dbReference>
<dbReference type="FunFam" id="3.40.50.720:FF:000059">
    <property type="entry name" value="L-threonine 3-dehydrogenase"/>
    <property type="match status" value="1"/>
</dbReference>
<dbReference type="Gene3D" id="3.90.180.10">
    <property type="entry name" value="Medium-chain alcohol dehydrogenases, catalytic domain"/>
    <property type="match status" value="1"/>
</dbReference>
<dbReference type="Gene3D" id="3.40.50.720">
    <property type="entry name" value="NAD(P)-binding Rossmann-like Domain"/>
    <property type="match status" value="1"/>
</dbReference>
<dbReference type="HAMAP" id="MF_00627">
    <property type="entry name" value="Thr_dehydrog"/>
    <property type="match status" value="1"/>
</dbReference>
<dbReference type="InterPro" id="IPR013149">
    <property type="entry name" value="ADH-like_C"/>
</dbReference>
<dbReference type="InterPro" id="IPR013154">
    <property type="entry name" value="ADH-like_N"/>
</dbReference>
<dbReference type="InterPro" id="IPR002328">
    <property type="entry name" value="ADH_Zn_CS"/>
</dbReference>
<dbReference type="InterPro" id="IPR011032">
    <property type="entry name" value="GroES-like_sf"/>
</dbReference>
<dbReference type="InterPro" id="IPR004627">
    <property type="entry name" value="L-Threonine_3-DHase"/>
</dbReference>
<dbReference type="InterPro" id="IPR036291">
    <property type="entry name" value="NAD(P)-bd_dom_sf"/>
</dbReference>
<dbReference type="InterPro" id="IPR020843">
    <property type="entry name" value="PKS_ER"/>
</dbReference>
<dbReference type="InterPro" id="IPR050129">
    <property type="entry name" value="Zn_alcohol_dh"/>
</dbReference>
<dbReference type="NCBIfam" id="NF003808">
    <property type="entry name" value="PRK05396.1"/>
    <property type="match status" value="1"/>
</dbReference>
<dbReference type="NCBIfam" id="TIGR00692">
    <property type="entry name" value="tdh"/>
    <property type="match status" value="1"/>
</dbReference>
<dbReference type="PANTHER" id="PTHR43401">
    <property type="entry name" value="L-THREONINE 3-DEHYDROGENASE"/>
    <property type="match status" value="1"/>
</dbReference>
<dbReference type="PANTHER" id="PTHR43401:SF2">
    <property type="entry name" value="L-THREONINE 3-DEHYDROGENASE"/>
    <property type="match status" value="1"/>
</dbReference>
<dbReference type="Pfam" id="PF08240">
    <property type="entry name" value="ADH_N"/>
    <property type="match status" value="1"/>
</dbReference>
<dbReference type="Pfam" id="PF00107">
    <property type="entry name" value="ADH_zinc_N"/>
    <property type="match status" value="1"/>
</dbReference>
<dbReference type="SMART" id="SM00829">
    <property type="entry name" value="PKS_ER"/>
    <property type="match status" value="1"/>
</dbReference>
<dbReference type="SUPFAM" id="SSF50129">
    <property type="entry name" value="GroES-like"/>
    <property type="match status" value="1"/>
</dbReference>
<dbReference type="SUPFAM" id="SSF51735">
    <property type="entry name" value="NAD(P)-binding Rossmann-fold domains"/>
    <property type="match status" value="1"/>
</dbReference>
<dbReference type="PROSITE" id="PS00059">
    <property type="entry name" value="ADH_ZINC"/>
    <property type="match status" value="1"/>
</dbReference>